<gene>
    <name evidence="1" type="primary">pyrD</name>
    <name type="ordered locus">BruAb1_0337</name>
</gene>
<organism>
    <name type="scientific">Brucella abortus biovar 1 (strain 9-941)</name>
    <dbReference type="NCBI Taxonomy" id="262698"/>
    <lineage>
        <taxon>Bacteria</taxon>
        <taxon>Pseudomonadati</taxon>
        <taxon>Pseudomonadota</taxon>
        <taxon>Alphaproteobacteria</taxon>
        <taxon>Hyphomicrobiales</taxon>
        <taxon>Brucellaceae</taxon>
        <taxon>Brucella/Ochrobactrum group</taxon>
        <taxon>Brucella</taxon>
    </lineage>
</organism>
<keyword id="KW-1003">Cell membrane</keyword>
<keyword id="KW-0285">Flavoprotein</keyword>
<keyword id="KW-0288">FMN</keyword>
<keyword id="KW-0472">Membrane</keyword>
<keyword id="KW-0560">Oxidoreductase</keyword>
<keyword id="KW-0665">Pyrimidine biosynthesis</keyword>
<proteinExistence type="inferred from homology"/>
<comment type="function">
    <text evidence="1">Catalyzes the conversion of dihydroorotate to orotate with quinone as electron acceptor.</text>
</comment>
<comment type="catalytic activity">
    <reaction evidence="1">
        <text>(S)-dihydroorotate + a quinone = orotate + a quinol</text>
        <dbReference type="Rhea" id="RHEA:30187"/>
        <dbReference type="ChEBI" id="CHEBI:24646"/>
        <dbReference type="ChEBI" id="CHEBI:30839"/>
        <dbReference type="ChEBI" id="CHEBI:30864"/>
        <dbReference type="ChEBI" id="CHEBI:132124"/>
        <dbReference type="EC" id="1.3.5.2"/>
    </reaction>
</comment>
<comment type="cofactor">
    <cofactor evidence="1">
        <name>FMN</name>
        <dbReference type="ChEBI" id="CHEBI:58210"/>
    </cofactor>
    <text evidence="1">Binds 1 FMN per subunit.</text>
</comment>
<comment type="pathway">
    <text evidence="1">Pyrimidine metabolism; UMP biosynthesis via de novo pathway; orotate from (S)-dihydroorotate (quinone route): step 1/1.</text>
</comment>
<comment type="subunit">
    <text evidence="1">Monomer.</text>
</comment>
<comment type="subcellular location">
    <subcellularLocation>
        <location evidence="1">Cell membrane</location>
        <topology evidence="1">Peripheral membrane protein</topology>
    </subcellularLocation>
</comment>
<comment type="similarity">
    <text evidence="1">Belongs to the dihydroorotate dehydrogenase family. Type 2 subfamily.</text>
</comment>
<name>PYRD_BRUAB</name>
<sequence length="364" mass="39257">MSGLFETLGRRALFTFDAEQAHGLSITGLKTGIVTCRTPEDPALSVKVAGLKFPNPLGMAAGYDKNAEVPDALLKLGFGFAEVGTLTPRPQSGNPRPRIFRLVDDKAVINRLGFNNEGHEAAFKRLSRRAGKSGIVGVNIGANKDAEDRIADYVAGIRRFYLLARYFTVNISSPNTPGLRNLQAREALHELLSRVLEARDEEGNMCTLKRPVFLKIAPDLTDEELDDIAAEADAQKLDGIIVSNTTLSRSGLKNPENSNETGGLSGAPLFERSTVVLARMRERVGPDMPLIGVGGIDSAETALAKIKAGADLVQLYTGLIYRGPGLPGEILRGLSTAIKHEGVSSIAELRDRDTKEWAARKLIS</sequence>
<reference key="1">
    <citation type="journal article" date="2005" name="J. Bacteriol.">
        <title>Completion of the genome sequence of Brucella abortus and comparison to the highly similar genomes of Brucella melitensis and Brucella suis.</title>
        <authorList>
            <person name="Halling S.M."/>
            <person name="Peterson-Burch B.D."/>
            <person name="Bricker B.J."/>
            <person name="Zuerner R.L."/>
            <person name="Qing Z."/>
            <person name="Li L.-L."/>
            <person name="Kapur V."/>
            <person name="Alt D.P."/>
            <person name="Olsen S.C."/>
        </authorList>
    </citation>
    <scope>NUCLEOTIDE SEQUENCE [LARGE SCALE GENOMIC DNA]</scope>
    <source>
        <strain>9-941</strain>
    </source>
</reference>
<dbReference type="EC" id="1.3.5.2" evidence="1"/>
<dbReference type="EMBL" id="AE017223">
    <property type="protein sequence ID" value="AAX73737.1"/>
    <property type="molecule type" value="Genomic_DNA"/>
</dbReference>
<dbReference type="RefSeq" id="WP_002963475.1">
    <property type="nucleotide sequence ID" value="NC_006932.1"/>
</dbReference>
<dbReference type="SMR" id="Q57F47"/>
<dbReference type="EnsemblBacteria" id="AAX73737">
    <property type="protein sequence ID" value="AAX73737"/>
    <property type="gene ID" value="BruAb1_0337"/>
</dbReference>
<dbReference type="KEGG" id="bmb:BruAb1_0337"/>
<dbReference type="HOGENOM" id="CLU_013640_2_1_5"/>
<dbReference type="UniPathway" id="UPA00070">
    <property type="reaction ID" value="UER00946"/>
</dbReference>
<dbReference type="PRO" id="PR:Q57F47"/>
<dbReference type="Proteomes" id="UP000000540">
    <property type="component" value="Chromosome I"/>
</dbReference>
<dbReference type="GO" id="GO:0005737">
    <property type="term" value="C:cytoplasm"/>
    <property type="evidence" value="ECO:0007669"/>
    <property type="project" value="InterPro"/>
</dbReference>
<dbReference type="GO" id="GO:0005886">
    <property type="term" value="C:plasma membrane"/>
    <property type="evidence" value="ECO:0007669"/>
    <property type="project" value="UniProtKB-SubCell"/>
</dbReference>
<dbReference type="GO" id="GO:0106430">
    <property type="term" value="F:dihydroorotate dehydrogenase (quinone) activity"/>
    <property type="evidence" value="ECO:0007669"/>
    <property type="project" value="UniProtKB-EC"/>
</dbReference>
<dbReference type="GO" id="GO:0006207">
    <property type="term" value="P:'de novo' pyrimidine nucleobase biosynthetic process"/>
    <property type="evidence" value="ECO:0007669"/>
    <property type="project" value="InterPro"/>
</dbReference>
<dbReference type="GO" id="GO:0044205">
    <property type="term" value="P:'de novo' UMP biosynthetic process"/>
    <property type="evidence" value="ECO:0007669"/>
    <property type="project" value="UniProtKB-UniRule"/>
</dbReference>
<dbReference type="CDD" id="cd04738">
    <property type="entry name" value="DHOD_2_like"/>
    <property type="match status" value="1"/>
</dbReference>
<dbReference type="Gene3D" id="3.20.20.70">
    <property type="entry name" value="Aldolase class I"/>
    <property type="match status" value="1"/>
</dbReference>
<dbReference type="HAMAP" id="MF_00225">
    <property type="entry name" value="DHO_dh_type2"/>
    <property type="match status" value="1"/>
</dbReference>
<dbReference type="InterPro" id="IPR013785">
    <property type="entry name" value="Aldolase_TIM"/>
</dbReference>
<dbReference type="InterPro" id="IPR050074">
    <property type="entry name" value="DHO_dehydrogenase"/>
</dbReference>
<dbReference type="InterPro" id="IPR005719">
    <property type="entry name" value="Dihydroorotate_DH_2"/>
</dbReference>
<dbReference type="InterPro" id="IPR005720">
    <property type="entry name" value="Dihydroorotate_DH_cat"/>
</dbReference>
<dbReference type="InterPro" id="IPR001295">
    <property type="entry name" value="Dihydroorotate_DH_CS"/>
</dbReference>
<dbReference type="NCBIfam" id="NF003645">
    <property type="entry name" value="PRK05286.1-2"/>
    <property type="match status" value="1"/>
</dbReference>
<dbReference type="NCBIfam" id="NF003652">
    <property type="entry name" value="PRK05286.2-5"/>
    <property type="match status" value="1"/>
</dbReference>
<dbReference type="NCBIfam" id="TIGR01036">
    <property type="entry name" value="pyrD_sub2"/>
    <property type="match status" value="1"/>
</dbReference>
<dbReference type="PANTHER" id="PTHR48109:SF4">
    <property type="entry name" value="DIHYDROOROTATE DEHYDROGENASE (QUINONE), MITOCHONDRIAL"/>
    <property type="match status" value="1"/>
</dbReference>
<dbReference type="PANTHER" id="PTHR48109">
    <property type="entry name" value="DIHYDROOROTATE DEHYDROGENASE (QUINONE), MITOCHONDRIAL-RELATED"/>
    <property type="match status" value="1"/>
</dbReference>
<dbReference type="Pfam" id="PF01180">
    <property type="entry name" value="DHO_dh"/>
    <property type="match status" value="1"/>
</dbReference>
<dbReference type="SUPFAM" id="SSF51395">
    <property type="entry name" value="FMN-linked oxidoreductases"/>
    <property type="match status" value="1"/>
</dbReference>
<dbReference type="PROSITE" id="PS00911">
    <property type="entry name" value="DHODEHASE_1"/>
    <property type="match status" value="1"/>
</dbReference>
<dbReference type="PROSITE" id="PS00912">
    <property type="entry name" value="DHODEHASE_2"/>
    <property type="match status" value="1"/>
</dbReference>
<protein>
    <recommendedName>
        <fullName evidence="1">Dihydroorotate dehydrogenase (quinone)</fullName>
        <ecNumber evidence="1">1.3.5.2</ecNumber>
    </recommendedName>
    <alternativeName>
        <fullName evidence="1">DHOdehase</fullName>
        <shortName evidence="1">DHOD</shortName>
        <shortName evidence="1">DHODase</shortName>
    </alternativeName>
    <alternativeName>
        <fullName evidence="1">Dihydroorotate oxidase</fullName>
    </alternativeName>
</protein>
<evidence type="ECO:0000255" key="1">
    <source>
        <dbReference type="HAMAP-Rule" id="MF_00225"/>
    </source>
</evidence>
<feature type="chain" id="PRO_0000244528" description="Dihydroorotate dehydrogenase (quinone)">
    <location>
        <begin position="1"/>
        <end position="364"/>
    </location>
</feature>
<feature type="active site" description="Nucleophile" evidence="1">
    <location>
        <position position="173"/>
    </location>
</feature>
<feature type="binding site" evidence="1">
    <location>
        <begin position="61"/>
        <end position="65"/>
    </location>
    <ligand>
        <name>FMN</name>
        <dbReference type="ChEBI" id="CHEBI:58210"/>
    </ligand>
</feature>
<feature type="binding site" evidence="1">
    <location>
        <position position="65"/>
    </location>
    <ligand>
        <name>substrate</name>
    </ligand>
</feature>
<feature type="binding site" evidence="1">
    <location>
        <position position="85"/>
    </location>
    <ligand>
        <name>FMN</name>
        <dbReference type="ChEBI" id="CHEBI:58210"/>
    </ligand>
</feature>
<feature type="binding site" evidence="1">
    <location>
        <begin position="110"/>
        <end position="114"/>
    </location>
    <ligand>
        <name>substrate</name>
    </ligand>
</feature>
<feature type="binding site" evidence="1">
    <location>
        <position position="139"/>
    </location>
    <ligand>
        <name>FMN</name>
        <dbReference type="ChEBI" id="CHEBI:58210"/>
    </ligand>
</feature>
<feature type="binding site" evidence="1">
    <location>
        <position position="170"/>
    </location>
    <ligand>
        <name>FMN</name>
        <dbReference type="ChEBI" id="CHEBI:58210"/>
    </ligand>
</feature>
<feature type="binding site" evidence="1">
    <location>
        <position position="170"/>
    </location>
    <ligand>
        <name>substrate</name>
    </ligand>
</feature>
<feature type="binding site" evidence="1">
    <location>
        <position position="175"/>
    </location>
    <ligand>
        <name>substrate</name>
    </ligand>
</feature>
<feature type="binding site" evidence="1">
    <location>
        <position position="215"/>
    </location>
    <ligand>
        <name>FMN</name>
        <dbReference type="ChEBI" id="CHEBI:58210"/>
    </ligand>
</feature>
<feature type="binding site" evidence="1">
    <location>
        <position position="243"/>
    </location>
    <ligand>
        <name>FMN</name>
        <dbReference type="ChEBI" id="CHEBI:58210"/>
    </ligand>
</feature>
<feature type="binding site" evidence="1">
    <location>
        <begin position="244"/>
        <end position="245"/>
    </location>
    <ligand>
        <name>substrate</name>
    </ligand>
</feature>
<feature type="binding site" evidence="1">
    <location>
        <position position="266"/>
    </location>
    <ligand>
        <name>FMN</name>
        <dbReference type="ChEBI" id="CHEBI:58210"/>
    </ligand>
</feature>
<feature type="binding site" evidence="1">
    <location>
        <position position="295"/>
    </location>
    <ligand>
        <name>FMN</name>
        <dbReference type="ChEBI" id="CHEBI:58210"/>
    </ligand>
</feature>
<feature type="binding site" evidence="1">
    <location>
        <begin position="316"/>
        <end position="317"/>
    </location>
    <ligand>
        <name>FMN</name>
        <dbReference type="ChEBI" id="CHEBI:58210"/>
    </ligand>
</feature>
<accession>Q57F47</accession>